<keyword id="KW-0066">ATP synthesis</keyword>
<keyword id="KW-0067">ATP-binding</keyword>
<keyword id="KW-0997">Cell inner membrane</keyword>
<keyword id="KW-1003">Cell membrane</keyword>
<keyword id="KW-0139">CF(1)</keyword>
<keyword id="KW-0375">Hydrogen ion transport</keyword>
<keyword id="KW-0406">Ion transport</keyword>
<keyword id="KW-0472">Membrane</keyword>
<keyword id="KW-0547">Nucleotide-binding</keyword>
<keyword id="KW-1278">Translocase</keyword>
<keyword id="KW-0813">Transport</keyword>
<feature type="chain" id="PRO_1000086895" description="ATP synthase subunit alpha">
    <location>
        <begin position="1"/>
        <end position="513"/>
    </location>
</feature>
<feature type="binding site" evidence="1">
    <location>
        <begin position="169"/>
        <end position="176"/>
    </location>
    <ligand>
        <name>ATP</name>
        <dbReference type="ChEBI" id="CHEBI:30616"/>
    </ligand>
</feature>
<feature type="site" description="Required for activity" evidence="1">
    <location>
        <position position="373"/>
    </location>
</feature>
<sequence length="513" mass="55448">MQLNSTEISDLIKQRIEQFNVVSEARNEGTIVAVSDGIIRIHGLADVMQGEMIELPGNRFAIALNLERDSVGAVVMGPYANLAEGDKVKTTGRILEVPVGRGLLGRVVNTLGEPIDGKGPLEHDGFSPVEVIAPGVIERKSVDQPVQTGYKAVDSMIPIGRGQRELIIGDRQIGKTALAIDAIINQKDTGIKCVYVAVGQKASTIANVVRKLDEHGALANTIVVVATASEAAALQYLAPYSGCSMGEYFRDRGEDSLIVYDDLSKQAVAYRQISLLLKRPPGREAYPGDVFYLHSRLLERASRVNAEYVEKFTKGEVKGQTGSLTALPIIETQAGDVSAFVPTNVISITDGQIFLETDLFNSGLRPAVNPGISVSRVGGAAQTKIIKKLSGGIRSALAQYRELAAFSQFASDLDDATRAQLEHGERVTELMKQKQYAPMSVANQAVSIFSAEKGYLKSVELNKIGDFEASLLSFMNSEHADLMKTINDTGDYNADIEGELKAGLDKFVETQTW</sequence>
<comment type="function">
    <text evidence="1">Produces ATP from ADP in the presence of a proton gradient across the membrane. The alpha chain is a regulatory subunit.</text>
</comment>
<comment type="catalytic activity">
    <reaction evidence="1">
        <text>ATP + H2O + 4 H(+)(in) = ADP + phosphate + 5 H(+)(out)</text>
        <dbReference type="Rhea" id="RHEA:57720"/>
        <dbReference type="ChEBI" id="CHEBI:15377"/>
        <dbReference type="ChEBI" id="CHEBI:15378"/>
        <dbReference type="ChEBI" id="CHEBI:30616"/>
        <dbReference type="ChEBI" id="CHEBI:43474"/>
        <dbReference type="ChEBI" id="CHEBI:456216"/>
        <dbReference type="EC" id="7.1.2.2"/>
    </reaction>
</comment>
<comment type="subunit">
    <text evidence="1">F-type ATPases have 2 components, CF(1) - the catalytic core - and CF(0) - the membrane proton channel. CF(1) has five subunits: alpha(3), beta(3), gamma(1), delta(1), epsilon(1). CF(0) has three main subunits: a(1), b(2) and c(9-12). The alpha and beta chains form an alternating ring which encloses part of the gamma chain. CF(1) is attached to CF(0) by a central stalk formed by the gamma and epsilon chains, while a peripheral stalk is formed by the delta and b chains.</text>
</comment>
<comment type="subcellular location">
    <subcellularLocation>
        <location evidence="1">Cell inner membrane</location>
        <topology evidence="1">Peripheral membrane protein</topology>
    </subcellularLocation>
</comment>
<comment type="similarity">
    <text evidence="1">Belongs to the ATPase alpha/beta chains family.</text>
</comment>
<evidence type="ECO:0000255" key="1">
    <source>
        <dbReference type="HAMAP-Rule" id="MF_01346"/>
    </source>
</evidence>
<accession>B0TQF6</accession>
<gene>
    <name evidence="1" type="primary">atpA</name>
    <name type="ordered locus">Shal_4296</name>
</gene>
<proteinExistence type="inferred from homology"/>
<dbReference type="EC" id="7.1.2.2" evidence="1"/>
<dbReference type="EMBL" id="CP000931">
    <property type="protein sequence ID" value="ABZ78836.1"/>
    <property type="molecule type" value="Genomic_DNA"/>
</dbReference>
<dbReference type="RefSeq" id="WP_012279340.1">
    <property type="nucleotide sequence ID" value="NC_010334.1"/>
</dbReference>
<dbReference type="SMR" id="B0TQF6"/>
<dbReference type="STRING" id="458817.Shal_4296"/>
<dbReference type="KEGG" id="shl:Shal_4296"/>
<dbReference type="eggNOG" id="COG0056">
    <property type="taxonomic scope" value="Bacteria"/>
</dbReference>
<dbReference type="HOGENOM" id="CLU_010091_2_1_6"/>
<dbReference type="OrthoDB" id="9803053at2"/>
<dbReference type="Proteomes" id="UP000001317">
    <property type="component" value="Chromosome"/>
</dbReference>
<dbReference type="GO" id="GO:0005886">
    <property type="term" value="C:plasma membrane"/>
    <property type="evidence" value="ECO:0007669"/>
    <property type="project" value="UniProtKB-SubCell"/>
</dbReference>
<dbReference type="GO" id="GO:0045259">
    <property type="term" value="C:proton-transporting ATP synthase complex"/>
    <property type="evidence" value="ECO:0007669"/>
    <property type="project" value="UniProtKB-KW"/>
</dbReference>
<dbReference type="GO" id="GO:0043531">
    <property type="term" value="F:ADP binding"/>
    <property type="evidence" value="ECO:0007669"/>
    <property type="project" value="TreeGrafter"/>
</dbReference>
<dbReference type="GO" id="GO:0005524">
    <property type="term" value="F:ATP binding"/>
    <property type="evidence" value="ECO:0007669"/>
    <property type="project" value="UniProtKB-UniRule"/>
</dbReference>
<dbReference type="GO" id="GO:0046933">
    <property type="term" value="F:proton-transporting ATP synthase activity, rotational mechanism"/>
    <property type="evidence" value="ECO:0007669"/>
    <property type="project" value="UniProtKB-UniRule"/>
</dbReference>
<dbReference type="CDD" id="cd18113">
    <property type="entry name" value="ATP-synt_F1_alpha_C"/>
    <property type="match status" value="1"/>
</dbReference>
<dbReference type="CDD" id="cd18116">
    <property type="entry name" value="ATP-synt_F1_alpha_N"/>
    <property type="match status" value="1"/>
</dbReference>
<dbReference type="CDD" id="cd01132">
    <property type="entry name" value="F1-ATPase_alpha_CD"/>
    <property type="match status" value="1"/>
</dbReference>
<dbReference type="FunFam" id="1.20.150.20:FF:000001">
    <property type="entry name" value="ATP synthase subunit alpha"/>
    <property type="match status" value="1"/>
</dbReference>
<dbReference type="FunFam" id="2.40.30.20:FF:000001">
    <property type="entry name" value="ATP synthase subunit alpha"/>
    <property type="match status" value="1"/>
</dbReference>
<dbReference type="FunFam" id="3.40.50.300:FF:000002">
    <property type="entry name" value="ATP synthase subunit alpha"/>
    <property type="match status" value="1"/>
</dbReference>
<dbReference type="Gene3D" id="2.40.30.20">
    <property type="match status" value="1"/>
</dbReference>
<dbReference type="Gene3D" id="1.20.150.20">
    <property type="entry name" value="ATP synthase alpha/beta chain, C-terminal domain"/>
    <property type="match status" value="1"/>
</dbReference>
<dbReference type="Gene3D" id="3.40.50.300">
    <property type="entry name" value="P-loop containing nucleotide triphosphate hydrolases"/>
    <property type="match status" value="1"/>
</dbReference>
<dbReference type="HAMAP" id="MF_01346">
    <property type="entry name" value="ATP_synth_alpha_bact"/>
    <property type="match status" value="1"/>
</dbReference>
<dbReference type="InterPro" id="IPR023366">
    <property type="entry name" value="ATP_synth_asu-like_sf"/>
</dbReference>
<dbReference type="InterPro" id="IPR000793">
    <property type="entry name" value="ATP_synth_asu_C"/>
</dbReference>
<dbReference type="InterPro" id="IPR038376">
    <property type="entry name" value="ATP_synth_asu_C_sf"/>
</dbReference>
<dbReference type="InterPro" id="IPR033732">
    <property type="entry name" value="ATP_synth_F1_a_nt-bd_dom"/>
</dbReference>
<dbReference type="InterPro" id="IPR005294">
    <property type="entry name" value="ATP_synth_F1_asu"/>
</dbReference>
<dbReference type="InterPro" id="IPR020003">
    <property type="entry name" value="ATPase_a/bsu_AS"/>
</dbReference>
<dbReference type="InterPro" id="IPR004100">
    <property type="entry name" value="ATPase_F1/V1/A1_a/bsu_N"/>
</dbReference>
<dbReference type="InterPro" id="IPR036121">
    <property type="entry name" value="ATPase_F1/V1/A1_a/bsu_N_sf"/>
</dbReference>
<dbReference type="InterPro" id="IPR000194">
    <property type="entry name" value="ATPase_F1/V1/A1_a/bsu_nucl-bd"/>
</dbReference>
<dbReference type="InterPro" id="IPR027417">
    <property type="entry name" value="P-loop_NTPase"/>
</dbReference>
<dbReference type="NCBIfam" id="TIGR00962">
    <property type="entry name" value="atpA"/>
    <property type="match status" value="1"/>
</dbReference>
<dbReference type="NCBIfam" id="NF009884">
    <property type="entry name" value="PRK13343.1"/>
    <property type="match status" value="1"/>
</dbReference>
<dbReference type="PANTHER" id="PTHR48082">
    <property type="entry name" value="ATP SYNTHASE SUBUNIT ALPHA, MITOCHONDRIAL"/>
    <property type="match status" value="1"/>
</dbReference>
<dbReference type="PANTHER" id="PTHR48082:SF2">
    <property type="entry name" value="ATP SYNTHASE SUBUNIT ALPHA, MITOCHONDRIAL"/>
    <property type="match status" value="1"/>
</dbReference>
<dbReference type="Pfam" id="PF00006">
    <property type="entry name" value="ATP-synt_ab"/>
    <property type="match status" value="1"/>
</dbReference>
<dbReference type="Pfam" id="PF00306">
    <property type="entry name" value="ATP-synt_ab_C"/>
    <property type="match status" value="1"/>
</dbReference>
<dbReference type="Pfam" id="PF02874">
    <property type="entry name" value="ATP-synt_ab_N"/>
    <property type="match status" value="1"/>
</dbReference>
<dbReference type="SUPFAM" id="SSF47917">
    <property type="entry name" value="C-terminal domain of alpha and beta subunits of F1 ATP synthase"/>
    <property type="match status" value="1"/>
</dbReference>
<dbReference type="SUPFAM" id="SSF50615">
    <property type="entry name" value="N-terminal domain of alpha and beta subunits of F1 ATP synthase"/>
    <property type="match status" value="1"/>
</dbReference>
<dbReference type="SUPFAM" id="SSF52540">
    <property type="entry name" value="P-loop containing nucleoside triphosphate hydrolases"/>
    <property type="match status" value="1"/>
</dbReference>
<dbReference type="PROSITE" id="PS00152">
    <property type="entry name" value="ATPASE_ALPHA_BETA"/>
    <property type="match status" value="1"/>
</dbReference>
<name>ATPA_SHEHH</name>
<protein>
    <recommendedName>
        <fullName evidence="1">ATP synthase subunit alpha</fullName>
        <ecNumber evidence="1">7.1.2.2</ecNumber>
    </recommendedName>
    <alternativeName>
        <fullName evidence="1">ATP synthase F1 sector subunit alpha</fullName>
    </alternativeName>
    <alternativeName>
        <fullName evidence="1">F-ATPase subunit alpha</fullName>
    </alternativeName>
</protein>
<reference key="1">
    <citation type="submission" date="2008-01" db="EMBL/GenBank/DDBJ databases">
        <title>Complete sequence of Shewanella halifaxensis HAW-EB4.</title>
        <authorList>
            <consortium name="US DOE Joint Genome Institute"/>
            <person name="Copeland A."/>
            <person name="Lucas S."/>
            <person name="Lapidus A."/>
            <person name="Glavina del Rio T."/>
            <person name="Dalin E."/>
            <person name="Tice H."/>
            <person name="Bruce D."/>
            <person name="Goodwin L."/>
            <person name="Pitluck S."/>
            <person name="Sims D."/>
            <person name="Brettin T."/>
            <person name="Detter J.C."/>
            <person name="Han C."/>
            <person name="Kuske C.R."/>
            <person name="Schmutz J."/>
            <person name="Larimer F."/>
            <person name="Land M."/>
            <person name="Hauser L."/>
            <person name="Kyrpides N."/>
            <person name="Kim E."/>
            <person name="Zhao J.-S."/>
            <person name="Richardson P."/>
        </authorList>
    </citation>
    <scope>NUCLEOTIDE SEQUENCE [LARGE SCALE GENOMIC DNA]</scope>
    <source>
        <strain>HAW-EB4</strain>
    </source>
</reference>
<organism>
    <name type="scientific">Shewanella halifaxensis (strain HAW-EB4)</name>
    <dbReference type="NCBI Taxonomy" id="458817"/>
    <lineage>
        <taxon>Bacteria</taxon>
        <taxon>Pseudomonadati</taxon>
        <taxon>Pseudomonadota</taxon>
        <taxon>Gammaproteobacteria</taxon>
        <taxon>Alteromonadales</taxon>
        <taxon>Shewanellaceae</taxon>
        <taxon>Shewanella</taxon>
    </lineage>
</organism>